<evidence type="ECO:0000256" key="1">
    <source>
        <dbReference type="SAM" id="MobiDB-lite"/>
    </source>
</evidence>
<protein>
    <recommendedName>
        <fullName>Uncharacterized protein C45G9.4</fullName>
    </recommendedName>
</protein>
<organism>
    <name type="scientific">Caenorhabditis elegans</name>
    <dbReference type="NCBI Taxonomy" id="6239"/>
    <lineage>
        <taxon>Eukaryota</taxon>
        <taxon>Metazoa</taxon>
        <taxon>Ecdysozoa</taxon>
        <taxon>Nematoda</taxon>
        <taxon>Chromadorea</taxon>
        <taxon>Rhabditida</taxon>
        <taxon>Rhabditina</taxon>
        <taxon>Rhabditomorpha</taxon>
        <taxon>Rhabditoidea</taxon>
        <taxon>Rhabditidae</taxon>
        <taxon>Peloderinae</taxon>
        <taxon>Caenorhabditis</taxon>
    </lineage>
</organism>
<keyword id="KW-1185">Reference proteome</keyword>
<feature type="chain" id="PRO_0000065236" description="Uncharacterized protein C45G9.4">
    <location>
        <begin position="1"/>
        <end position="292"/>
    </location>
</feature>
<feature type="region of interest" description="Disordered" evidence="1">
    <location>
        <begin position="1"/>
        <end position="213"/>
    </location>
</feature>
<feature type="compositionally biased region" description="Basic residues" evidence="1">
    <location>
        <begin position="27"/>
        <end position="43"/>
    </location>
</feature>
<feature type="compositionally biased region" description="Basic residues" evidence="1">
    <location>
        <begin position="50"/>
        <end position="78"/>
    </location>
</feature>
<feature type="compositionally biased region" description="Polar residues" evidence="1">
    <location>
        <begin position="90"/>
        <end position="100"/>
    </location>
</feature>
<feature type="compositionally biased region" description="Pro residues" evidence="1">
    <location>
        <begin position="116"/>
        <end position="134"/>
    </location>
</feature>
<feature type="compositionally biased region" description="Low complexity" evidence="1">
    <location>
        <begin position="143"/>
        <end position="158"/>
    </location>
</feature>
<name>YQI4_CAEEL</name>
<gene>
    <name type="ORF">C45G9.4</name>
</gene>
<reference key="1">
    <citation type="journal article" date="1998" name="Science">
        <title>Genome sequence of the nematode C. elegans: a platform for investigating biology.</title>
        <authorList>
            <consortium name="The C. elegans sequencing consortium"/>
        </authorList>
    </citation>
    <scope>NUCLEOTIDE SEQUENCE [LARGE SCALE GENOMIC DNA]</scope>
    <source>
        <strain>Bristol N2</strain>
    </source>
</reference>
<accession>Q09505</accession>
<sequence length="292" mass="32454">MTTAITPDKKKLVSPKPTKTTSDKSKTKPRRSSKTSKKRKSKKGLFGCCAKKRKTKRSKKSAKRTKRSAPKKAPKKAPMKAPSKPAAIPQQAQASLQKPIQSGIVDADAKAKTVVPRPPTPIPPTGVKPEPAPRSEPLYQPRSVSSTTPRTSATTGTTEQMVTAPATLPPPSAESKHLPQDPPGDASSPRVQRQYTAEKYSKEDQDDDDQKDLRKSVAYPSHKFFMTQYVKDECRVRRWVYEDSVPLMMESNMKHMLRMASNRIAACQSDKATRCDMMKDLNEMTEILDGNF</sequence>
<dbReference type="EMBL" id="FO080873">
    <property type="protein sequence ID" value="CCD67392.1"/>
    <property type="molecule type" value="Genomic_DNA"/>
</dbReference>
<dbReference type="PIR" id="G88448">
    <property type="entry name" value="G88448"/>
</dbReference>
<dbReference type="RefSeq" id="NP_498076.1">
    <property type="nucleotide sequence ID" value="NM_065675.5"/>
</dbReference>
<dbReference type="FunCoup" id="Q09505">
    <property type="interactions" value="173"/>
</dbReference>
<dbReference type="STRING" id="6239.C45G9.4.1"/>
<dbReference type="PaxDb" id="6239-C45G9.4"/>
<dbReference type="EnsemblMetazoa" id="C45G9.4.1">
    <property type="protein sequence ID" value="C45G9.4.1"/>
    <property type="gene ID" value="WBGene00016675"/>
</dbReference>
<dbReference type="GeneID" id="175689"/>
<dbReference type="KEGG" id="cel:CELE_C45G9.4"/>
<dbReference type="UCSC" id="C45G9.4">
    <property type="organism name" value="c. elegans"/>
</dbReference>
<dbReference type="AGR" id="WB:WBGene00016675"/>
<dbReference type="CTD" id="175689"/>
<dbReference type="WormBase" id="C45G9.4">
    <property type="protein sequence ID" value="CE01855"/>
    <property type="gene ID" value="WBGene00016675"/>
</dbReference>
<dbReference type="eggNOG" id="ENOG502THM3">
    <property type="taxonomic scope" value="Eukaryota"/>
</dbReference>
<dbReference type="GeneTree" id="ENSGT00970000196644"/>
<dbReference type="HOGENOM" id="CLU_083119_0_0_1"/>
<dbReference type="InParanoid" id="Q09505"/>
<dbReference type="OMA" id="NECRVRR"/>
<dbReference type="OrthoDB" id="5876285at2759"/>
<dbReference type="PRO" id="PR:Q09505"/>
<dbReference type="Proteomes" id="UP000001940">
    <property type="component" value="Chromosome III"/>
</dbReference>
<dbReference type="Bgee" id="WBGene00016675">
    <property type="expression patterns" value="Expressed in adult organism and 1 other cell type or tissue"/>
</dbReference>
<proteinExistence type="predicted"/>